<keyword id="KW-0028">Amino-acid biosynthesis</keyword>
<keyword id="KW-0067">ATP-binding</keyword>
<keyword id="KW-0418">Kinase</keyword>
<keyword id="KW-0547">Nucleotide-binding</keyword>
<keyword id="KW-1185">Reference proteome</keyword>
<keyword id="KW-0791">Threonine biosynthesis</keyword>
<keyword id="KW-0808">Transferase</keyword>
<comment type="catalytic activity">
    <reaction evidence="1">
        <text>L-homoserine + ATP = O-phospho-L-homoserine + ADP + H(+)</text>
        <dbReference type="Rhea" id="RHEA:13985"/>
        <dbReference type="ChEBI" id="CHEBI:15378"/>
        <dbReference type="ChEBI" id="CHEBI:30616"/>
        <dbReference type="ChEBI" id="CHEBI:57476"/>
        <dbReference type="ChEBI" id="CHEBI:57590"/>
        <dbReference type="ChEBI" id="CHEBI:456216"/>
        <dbReference type="EC" id="2.7.1.39"/>
    </reaction>
</comment>
<comment type="pathway">
    <text evidence="1">Amino-acid biosynthesis; L-threonine biosynthesis; L-threonine from L-aspartate: step 4/5.</text>
</comment>
<comment type="similarity">
    <text evidence="1">Belongs to the pseudomonas-type ThrB family.</text>
</comment>
<evidence type="ECO:0000255" key="1">
    <source>
        <dbReference type="HAMAP-Rule" id="MF_00301"/>
    </source>
</evidence>
<sequence length="305" mass="33619">MSVYTSVSDDEMRGFLSGYDLGEFVSLQGIAQGITNSNYFLTTTSGRYVLTVFEVLKQEELPFFLELNRHLSMKGVAVAAPVARKDGRLDSVLAGKPACLVACLKGSDTALPTAEQCFHTGAMLAKMHLAAADFPLEMENPRYNAWWTEACARLLPVLSQDDAALLCSEIDALKDNLGNHLPSGIIHADLFKDNVLLDGGQVSGFIDFYYACRGNFMYDLAIAVNDWARTADNKLDEALKKAFIGGYEGVRPLSAEEKAYFPTAQRAGCIRFWVSRLLDFHFPQAGEMTFIKDPNAFRNLLLSLG</sequence>
<dbReference type="EC" id="2.7.1.39" evidence="1"/>
<dbReference type="EMBL" id="AE002098">
    <property type="protein sequence ID" value="AAY52153.1"/>
    <property type="molecule type" value="Genomic_DNA"/>
</dbReference>
<dbReference type="RefSeq" id="NP_275021.1">
    <property type="nucleotide sequence ID" value="NC_003112.2"/>
</dbReference>
<dbReference type="RefSeq" id="WP_002218156.1">
    <property type="nucleotide sequence ID" value="NC_003112.2"/>
</dbReference>
<dbReference type="SMR" id="Q4W557"/>
<dbReference type="STRING" id="122586.NMB2029"/>
<dbReference type="PaxDb" id="122586-NMB2029"/>
<dbReference type="GeneID" id="93386950"/>
<dbReference type="KEGG" id="nme:NMB2029"/>
<dbReference type="PATRIC" id="fig|122586.8.peg.2586"/>
<dbReference type="HOGENOM" id="CLU_053300_0_0_4"/>
<dbReference type="InParanoid" id="Q4W557"/>
<dbReference type="OrthoDB" id="9777460at2"/>
<dbReference type="UniPathway" id="UPA00050">
    <property type="reaction ID" value="UER00064"/>
</dbReference>
<dbReference type="Proteomes" id="UP000000425">
    <property type="component" value="Chromosome"/>
</dbReference>
<dbReference type="GO" id="GO:0005524">
    <property type="term" value="F:ATP binding"/>
    <property type="evidence" value="ECO:0007669"/>
    <property type="project" value="UniProtKB-KW"/>
</dbReference>
<dbReference type="GO" id="GO:0004413">
    <property type="term" value="F:homoserine kinase activity"/>
    <property type="evidence" value="ECO:0000318"/>
    <property type="project" value="GO_Central"/>
</dbReference>
<dbReference type="GO" id="GO:0009088">
    <property type="term" value="P:threonine biosynthetic process"/>
    <property type="evidence" value="ECO:0000318"/>
    <property type="project" value="GO_Central"/>
</dbReference>
<dbReference type="CDD" id="cd05153">
    <property type="entry name" value="HomoserineK_II"/>
    <property type="match status" value="1"/>
</dbReference>
<dbReference type="FunFam" id="3.90.1200.10:FF:000028">
    <property type="entry name" value="Homoserine kinase"/>
    <property type="match status" value="1"/>
</dbReference>
<dbReference type="Gene3D" id="3.90.1200.10">
    <property type="match status" value="1"/>
</dbReference>
<dbReference type="Gene3D" id="3.30.200.20">
    <property type="entry name" value="Phosphorylase Kinase, domain 1"/>
    <property type="match status" value="1"/>
</dbReference>
<dbReference type="HAMAP" id="MF_00301">
    <property type="entry name" value="Homoser_kinase_2"/>
    <property type="match status" value="1"/>
</dbReference>
<dbReference type="InterPro" id="IPR002575">
    <property type="entry name" value="Aminoglycoside_PTrfase"/>
</dbReference>
<dbReference type="InterPro" id="IPR005280">
    <property type="entry name" value="Homoserine_kinase_II"/>
</dbReference>
<dbReference type="InterPro" id="IPR011009">
    <property type="entry name" value="Kinase-like_dom_sf"/>
</dbReference>
<dbReference type="InterPro" id="IPR050249">
    <property type="entry name" value="Pseudomonas-type_ThrB"/>
</dbReference>
<dbReference type="NCBIfam" id="NF003558">
    <property type="entry name" value="PRK05231.1"/>
    <property type="match status" value="1"/>
</dbReference>
<dbReference type="NCBIfam" id="TIGR00938">
    <property type="entry name" value="thrB_alt"/>
    <property type="match status" value="1"/>
</dbReference>
<dbReference type="PANTHER" id="PTHR21064:SF6">
    <property type="entry name" value="AMINOGLYCOSIDE PHOSPHOTRANSFERASE DOMAIN-CONTAINING PROTEIN"/>
    <property type="match status" value="1"/>
</dbReference>
<dbReference type="PANTHER" id="PTHR21064">
    <property type="entry name" value="AMINOGLYCOSIDE PHOSPHOTRANSFERASE DOMAIN-CONTAINING PROTEIN-RELATED"/>
    <property type="match status" value="1"/>
</dbReference>
<dbReference type="Pfam" id="PF01636">
    <property type="entry name" value="APH"/>
    <property type="match status" value="1"/>
</dbReference>
<dbReference type="SUPFAM" id="SSF56112">
    <property type="entry name" value="Protein kinase-like (PK-like)"/>
    <property type="match status" value="1"/>
</dbReference>
<organism>
    <name type="scientific">Neisseria meningitidis serogroup B (strain ATCC BAA-335 / MC58)</name>
    <dbReference type="NCBI Taxonomy" id="122586"/>
    <lineage>
        <taxon>Bacteria</taxon>
        <taxon>Pseudomonadati</taxon>
        <taxon>Pseudomonadota</taxon>
        <taxon>Betaproteobacteria</taxon>
        <taxon>Neisseriales</taxon>
        <taxon>Neisseriaceae</taxon>
        <taxon>Neisseria</taxon>
    </lineage>
</organism>
<accession>Q4W557</accession>
<protein>
    <recommendedName>
        <fullName evidence="1">Homoserine kinase</fullName>
        <shortName evidence="1">HK</shortName>
        <shortName evidence="1">HSK</shortName>
        <ecNumber evidence="1">2.7.1.39</ecNumber>
    </recommendedName>
</protein>
<gene>
    <name evidence="1" type="primary">thrB</name>
    <name type="ordered locus">NMB2029</name>
</gene>
<reference key="1">
    <citation type="journal article" date="2000" name="Science">
        <title>Complete genome sequence of Neisseria meningitidis serogroup B strain MC58.</title>
        <authorList>
            <person name="Tettelin H."/>
            <person name="Saunders N.J."/>
            <person name="Heidelberg J.F."/>
            <person name="Jeffries A.C."/>
            <person name="Nelson K.E."/>
            <person name="Eisen J.A."/>
            <person name="Ketchum K.A."/>
            <person name="Hood D.W."/>
            <person name="Peden J.F."/>
            <person name="Dodson R.J."/>
            <person name="Nelson W.C."/>
            <person name="Gwinn M.L."/>
            <person name="DeBoy R.T."/>
            <person name="Peterson J.D."/>
            <person name="Hickey E.K."/>
            <person name="Haft D.H."/>
            <person name="Salzberg S.L."/>
            <person name="White O."/>
            <person name="Fleischmann R.D."/>
            <person name="Dougherty B.A."/>
            <person name="Mason T.M."/>
            <person name="Ciecko A."/>
            <person name="Parksey D.S."/>
            <person name="Blair E."/>
            <person name="Cittone H."/>
            <person name="Clark E.B."/>
            <person name="Cotton M.D."/>
            <person name="Utterback T.R."/>
            <person name="Khouri H.M."/>
            <person name="Qin H."/>
            <person name="Vamathevan J.J."/>
            <person name="Gill J."/>
            <person name="Scarlato V."/>
            <person name="Masignani V."/>
            <person name="Pizza M."/>
            <person name="Grandi G."/>
            <person name="Sun L."/>
            <person name="Smith H.O."/>
            <person name="Fraser C.M."/>
            <person name="Moxon E.R."/>
            <person name="Rappuoli R."/>
            <person name="Venter J.C."/>
        </authorList>
    </citation>
    <scope>NUCLEOTIDE SEQUENCE [LARGE SCALE GENOMIC DNA]</scope>
    <source>
        <strain>ATCC BAA-335 / MC58</strain>
    </source>
</reference>
<proteinExistence type="inferred from homology"/>
<name>KHSE_NEIMB</name>
<feature type="chain" id="PRO_0000172193" description="Homoserine kinase">
    <location>
        <begin position="1"/>
        <end position="305"/>
    </location>
</feature>